<keyword id="KW-0963">Cytoplasm</keyword>
<keyword id="KW-0342">GTP-binding</keyword>
<keyword id="KW-0378">Hydrolase</keyword>
<keyword id="KW-0460">Magnesium</keyword>
<keyword id="KW-0479">Metal-binding</keyword>
<keyword id="KW-0547">Nucleotide-binding</keyword>
<keyword id="KW-1185">Reference proteome</keyword>
<proteinExistence type="inferred from homology"/>
<dbReference type="EC" id="3.6.5.-" evidence="1"/>
<dbReference type="EMBL" id="CP001079">
    <property type="protein sequence ID" value="ACM49309.1"/>
    <property type="molecule type" value="Genomic_DNA"/>
</dbReference>
<dbReference type="RefSeq" id="WP_012658952.1">
    <property type="nucleotide sequence ID" value="NC_012026.1"/>
</dbReference>
<dbReference type="SMR" id="B9KIJ7"/>
<dbReference type="STRING" id="320483.AMF_449"/>
<dbReference type="GeneID" id="7397989"/>
<dbReference type="KEGG" id="amf:AMF_449"/>
<dbReference type="PATRIC" id="fig|320483.3.peg.527"/>
<dbReference type="eggNOG" id="COG0536">
    <property type="taxonomic scope" value="Bacteria"/>
</dbReference>
<dbReference type="HOGENOM" id="CLU_011747_2_0_5"/>
<dbReference type="Proteomes" id="UP000007307">
    <property type="component" value="Chromosome"/>
</dbReference>
<dbReference type="GO" id="GO:0005737">
    <property type="term" value="C:cytoplasm"/>
    <property type="evidence" value="ECO:0007669"/>
    <property type="project" value="UniProtKB-SubCell"/>
</dbReference>
<dbReference type="GO" id="GO:0005525">
    <property type="term" value="F:GTP binding"/>
    <property type="evidence" value="ECO:0007669"/>
    <property type="project" value="UniProtKB-UniRule"/>
</dbReference>
<dbReference type="GO" id="GO:0003924">
    <property type="term" value="F:GTPase activity"/>
    <property type="evidence" value="ECO:0007669"/>
    <property type="project" value="UniProtKB-UniRule"/>
</dbReference>
<dbReference type="GO" id="GO:0000287">
    <property type="term" value="F:magnesium ion binding"/>
    <property type="evidence" value="ECO:0007669"/>
    <property type="project" value="InterPro"/>
</dbReference>
<dbReference type="GO" id="GO:0042254">
    <property type="term" value="P:ribosome biogenesis"/>
    <property type="evidence" value="ECO:0007669"/>
    <property type="project" value="UniProtKB-UniRule"/>
</dbReference>
<dbReference type="CDD" id="cd01898">
    <property type="entry name" value="Obg"/>
    <property type="match status" value="1"/>
</dbReference>
<dbReference type="FunFam" id="2.70.210.12:FF:000001">
    <property type="entry name" value="GTPase Obg"/>
    <property type="match status" value="1"/>
</dbReference>
<dbReference type="Gene3D" id="2.70.210.12">
    <property type="entry name" value="GTP1/OBG domain"/>
    <property type="match status" value="1"/>
</dbReference>
<dbReference type="Gene3D" id="3.40.50.300">
    <property type="entry name" value="P-loop containing nucleotide triphosphate hydrolases"/>
    <property type="match status" value="1"/>
</dbReference>
<dbReference type="HAMAP" id="MF_01454">
    <property type="entry name" value="GTPase_Obg"/>
    <property type="match status" value="1"/>
</dbReference>
<dbReference type="InterPro" id="IPR031167">
    <property type="entry name" value="G_OBG"/>
</dbReference>
<dbReference type="InterPro" id="IPR006073">
    <property type="entry name" value="GTP-bd"/>
</dbReference>
<dbReference type="InterPro" id="IPR014100">
    <property type="entry name" value="GTP-bd_Obg/CgtA"/>
</dbReference>
<dbReference type="InterPro" id="IPR006074">
    <property type="entry name" value="GTP1-OBG_CS"/>
</dbReference>
<dbReference type="InterPro" id="IPR006169">
    <property type="entry name" value="GTP1_OBG_dom"/>
</dbReference>
<dbReference type="InterPro" id="IPR036726">
    <property type="entry name" value="GTP1_OBG_dom_sf"/>
</dbReference>
<dbReference type="InterPro" id="IPR045086">
    <property type="entry name" value="OBG_GTPase"/>
</dbReference>
<dbReference type="InterPro" id="IPR027417">
    <property type="entry name" value="P-loop_NTPase"/>
</dbReference>
<dbReference type="NCBIfam" id="TIGR02729">
    <property type="entry name" value="Obg_CgtA"/>
    <property type="match status" value="1"/>
</dbReference>
<dbReference type="NCBIfam" id="NF008955">
    <property type="entry name" value="PRK12297.1"/>
    <property type="match status" value="1"/>
</dbReference>
<dbReference type="NCBIfam" id="NF008956">
    <property type="entry name" value="PRK12299.1"/>
    <property type="match status" value="1"/>
</dbReference>
<dbReference type="PANTHER" id="PTHR11702">
    <property type="entry name" value="DEVELOPMENTALLY REGULATED GTP-BINDING PROTEIN-RELATED"/>
    <property type="match status" value="1"/>
</dbReference>
<dbReference type="PANTHER" id="PTHR11702:SF31">
    <property type="entry name" value="MITOCHONDRIAL RIBOSOME-ASSOCIATED GTPASE 2"/>
    <property type="match status" value="1"/>
</dbReference>
<dbReference type="Pfam" id="PF01018">
    <property type="entry name" value="GTP1_OBG"/>
    <property type="match status" value="1"/>
</dbReference>
<dbReference type="Pfam" id="PF01926">
    <property type="entry name" value="MMR_HSR1"/>
    <property type="match status" value="1"/>
</dbReference>
<dbReference type="PIRSF" id="PIRSF002401">
    <property type="entry name" value="GTP_bd_Obg/CgtA"/>
    <property type="match status" value="1"/>
</dbReference>
<dbReference type="PRINTS" id="PR00326">
    <property type="entry name" value="GTP1OBG"/>
</dbReference>
<dbReference type="SUPFAM" id="SSF82051">
    <property type="entry name" value="Obg GTP-binding protein N-terminal domain"/>
    <property type="match status" value="1"/>
</dbReference>
<dbReference type="SUPFAM" id="SSF52540">
    <property type="entry name" value="P-loop containing nucleoside triphosphate hydrolases"/>
    <property type="match status" value="1"/>
</dbReference>
<dbReference type="PROSITE" id="PS51710">
    <property type="entry name" value="G_OBG"/>
    <property type="match status" value="1"/>
</dbReference>
<dbReference type="PROSITE" id="PS00905">
    <property type="entry name" value="GTP1_OBG"/>
    <property type="match status" value="1"/>
</dbReference>
<dbReference type="PROSITE" id="PS51883">
    <property type="entry name" value="OBG"/>
    <property type="match status" value="1"/>
</dbReference>
<feature type="chain" id="PRO_0000385697" description="GTPase Obg 1">
    <location>
        <begin position="1"/>
        <end position="348"/>
    </location>
</feature>
<feature type="domain" description="Obg" evidence="2">
    <location>
        <begin position="1"/>
        <end position="159"/>
    </location>
</feature>
<feature type="domain" description="OBG-type G" evidence="1">
    <location>
        <begin position="160"/>
        <end position="329"/>
    </location>
</feature>
<feature type="binding site" evidence="1">
    <location>
        <begin position="166"/>
        <end position="173"/>
    </location>
    <ligand>
        <name>GTP</name>
        <dbReference type="ChEBI" id="CHEBI:37565"/>
    </ligand>
</feature>
<feature type="binding site" evidence="1">
    <location>
        <position position="173"/>
    </location>
    <ligand>
        <name>Mg(2+)</name>
        <dbReference type="ChEBI" id="CHEBI:18420"/>
    </ligand>
</feature>
<feature type="binding site" evidence="1">
    <location>
        <begin position="191"/>
        <end position="195"/>
    </location>
    <ligand>
        <name>GTP</name>
        <dbReference type="ChEBI" id="CHEBI:37565"/>
    </ligand>
</feature>
<feature type="binding site" evidence="1">
    <location>
        <position position="193"/>
    </location>
    <ligand>
        <name>Mg(2+)</name>
        <dbReference type="ChEBI" id="CHEBI:18420"/>
    </ligand>
</feature>
<feature type="binding site" evidence="1">
    <location>
        <begin position="212"/>
        <end position="215"/>
    </location>
    <ligand>
        <name>GTP</name>
        <dbReference type="ChEBI" id="CHEBI:37565"/>
    </ligand>
</feature>
<feature type="binding site" evidence="1">
    <location>
        <begin position="279"/>
        <end position="282"/>
    </location>
    <ligand>
        <name>GTP</name>
        <dbReference type="ChEBI" id="CHEBI:37565"/>
    </ligand>
</feature>
<feature type="binding site" evidence="1">
    <location>
        <begin position="310"/>
        <end position="312"/>
    </location>
    <ligand>
        <name>GTP</name>
        <dbReference type="ChEBI" id="CHEBI:37565"/>
    </ligand>
</feature>
<sequence length="348" mass="37443">MSFVDEAKIHVKGGKGGDGCVSFRREKFIEFGGPDGGNGGNGGSVIFVASSAVNTLLYFRYNQHIRAENGKAGSGKGKFGAAGRNRVVEVPVGTQLYDEDGNTLIADLNNIGQQYTVAAGGRGGIGNAQYKSSTNRAPTYFTYGTLGEEHCVLLKLKIVSDVGIIGMPNAGKSSLLSRCTASKTKVSDYPFTTLEPHLGVAYANGCELVLADIPGLIENASSGAGLGHKFLKHIERCVILLHLVDCSLPDIVSAYELVRQELKLHSQELTGKQEVVILNKCDLLSEGEVREKQKLLESSTKKEVITLSMGDELDSLIVFLHAQVKKAVVTEPSDTSFDPFLYVHYNKK</sequence>
<organism>
    <name type="scientific">Anaplasma marginale (strain Florida)</name>
    <dbReference type="NCBI Taxonomy" id="320483"/>
    <lineage>
        <taxon>Bacteria</taxon>
        <taxon>Pseudomonadati</taxon>
        <taxon>Pseudomonadota</taxon>
        <taxon>Alphaproteobacteria</taxon>
        <taxon>Rickettsiales</taxon>
        <taxon>Anaplasmataceae</taxon>
        <taxon>Anaplasma</taxon>
    </lineage>
</organism>
<reference key="1">
    <citation type="journal article" date="2009" name="BMC Genomics">
        <title>Conservation in the face of diversity: multistrain analysis of an intracellular bacterium.</title>
        <authorList>
            <person name="Dark M.J."/>
            <person name="Herndon D.R."/>
            <person name="Kappmeyer L.S."/>
            <person name="Gonzales M.P."/>
            <person name="Nordeen E."/>
            <person name="Palmer G.H."/>
            <person name="Knowles D.P. Jr."/>
            <person name="Brayton K.A."/>
        </authorList>
    </citation>
    <scope>NUCLEOTIDE SEQUENCE [LARGE SCALE GENOMIC DNA]</scope>
    <source>
        <strain>Florida</strain>
    </source>
</reference>
<comment type="function">
    <text evidence="1">An essential GTPase which binds GTP, GDP and possibly (p)ppGpp with moderate affinity, with high nucleotide exchange rates and a fairly low GTP hydrolysis rate. Plays a role in control of the cell cycle, stress response, ribosome biogenesis and in those bacteria that undergo differentiation, in morphogenesis control.</text>
</comment>
<comment type="cofactor">
    <cofactor evidence="1">
        <name>Mg(2+)</name>
        <dbReference type="ChEBI" id="CHEBI:18420"/>
    </cofactor>
</comment>
<comment type="subunit">
    <text evidence="1">Monomer.</text>
</comment>
<comment type="subcellular location">
    <subcellularLocation>
        <location evidence="1">Cytoplasm</location>
    </subcellularLocation>
</comment>
<comment type="similarity">
    <text evidence="1">Belongs to the TRAFAC class OBG-HflX-like GTPase superfamily. OBG GTPase family.</text>
</comment>
<gene>
    <name evidence="1" type="primary">obg1</name>
    <name type="ordered locus">AMF_449</name>
</gene>
<name>OBG1_ANAMF</name>
<evidence type="ECO:0000255" key="1">
    <source>
        <dbReference type="HAMAP-Rule" id="MF_01454"/>
    </source>
</evidence>
<evidence type="ECO:0000255" key="2">
    <source>
        <dbReference type="PROSITE-ProRule" id="PRU01231"/>
    </source>
</evidence>
<accession>B9KIJ7</accession>
<protein>
    <recommendedName>
        <fullName evidence="1">GTPase Obg 1</fullName>
        <ecNumber evidence="1">3.6.5.-</ecNumber>
    </recommendedName>
    <alternativeName>
        <fullName evidence="1">GTP-binding protein Obg 1</fullName>
    </alternativeName>
</protein>